<sequence>MELLGVRQPFGPQFQEEKYQMLELNHRLESYLGRVKLLEEENKLLREEIHTLKSSRDPAGQRKAQEEALSQARRMMEEAWRKKDCVELEVENLMEDMEKVSFQRKKVKTAQAEAQRKLTESRKELEEERRAQIWLREKVGQLEKDLMLQMQVHQENMETMQASLKQTKQVLMAPQRVQATSIPDLGQEYGYKAAQAWQEAANNYQKQVGRLEESLNQTKANMTKIYQEKRESQRQVQHLAKELESTRIKRQMLEKHAMQQREEQKEELQHLQAQVNTLELEKDCLGQQIDSLMLDRQHLLQVKMSLGLEVATYRALLDSEGLRIDRPTPNKTSSTVFLDALSKPTGIQSTSQTTAASCLLSSSVSTSHRSIASSRSLLTSAAPSWTLTRGTPQRPPSSTSMTEKTEDHISEETKRSAEESVDQLQQEKVQQDWTLESTLPKTSAEPKPELQPEEIKVEDEANEPQQAHMVESKTDESELTSVPAEQQGSMSQTPETKSWAGHFNDPAEVSEDGKDEDTEVSVEMARISHAPKVAWEEIKSAVEDEKDDASEMDVRSEIISESHTFAYGDAENDSNTLTSSHISQNTNALASSFLEQGTLDSASYFGYEATNENLMKEEELDNVSNISEEVTEQLNSETEAAIDSINEWDRQEESEPENETKVMTSYFEVEEGEMSINTDTKDKTEDDIEREELEVTEREILVQSAGGMLGVDLPNDTDHQDEHNLPQIELNEDQSEAEEENQKEKQCDEDDSPNISASLKTDPGEGDSYSQEHTLADTRPLIRYKSDEETSHHIGETSDSEDEKERIDQGHLNEKRFNTMEDLTEEPDMEVTGKMRLEDLVSNEEAAADDVASVMFQKVSGDHESLDVVVQESERKGNLEKEDSGDADNMRDNKEEDVSVFEQNENQQLTEHQHVHTEQVEDKPVHSHETQEHVNTEFSSTFSERSQQEQLEESSLTMFEDEAATKEAEDSDVSMHTNIDLIDSRSLESEINGQPDIMTSDMANSECNSSEDESPNASQCFQNTSLLAAATPNEQPLTFTNEVSKADYVSDNNDVPEEVLSEEKSTDEPKASQIDDLENFNIWGESTSISDAAQTTHASMDEHSSISPVNENLESSNKIPSVAENIFGHFEEHLERSVESFPEKEVTVMDFENNDLGEEFQSKQMKSEIHSFFSTSLKQDFWSEGKMEMAATYDPAKTEDLNQAMVFGEEWREIGVQSANGDTKEEMEILKIRDDKQKDGQPAQSKIVQSDDSADEGDSWSSGDE</sequence>
<feature type="chain" id="PRO_0000404197" description="Nestin">
    <location>
        <begin position="1"/>
        <end position="1265"/>
    </location>
</feature>
<feature type="domain" description="IF rod" evidence="3">
    <location>
        <begin position="17"/>
        <end position="324"/>
    </location>
</feature>
<feature type="region of interest" description="Head" evidence="2">
    <location>
        <begin position="1"/>
        <end position="16"/>
    </location>
</feature>
<feature type="region of interest" description="Coil 1A" evidence="2">
    <location>
        <begin position="17"/>
        <end position="52"/>
    </location>
</feature>
<feature type="region of interest" description="Linker 1" evidence="2">
    <location>
        <begin position="53"/>
        <end position="64"/>
    </location>
</feature>
<feature type="region of interest" description="Coil 1B" evidence="2">
    <location>
        <begin position="65"/>
        <end position="160"/>
    </location>
</feature>
<feature type="region of interest" description="Linker 12" evidence="2">
    <location>
        <begin position="161"/>
        <end position="183"/>
    </location>
</feature>
<feature type="region of interest" description="Coil 2A" evidence="2">
    <location>
        <begin position="184"/>
        <end position="203"/>
    </location>
</feature>
<feature type="region of interest" description="Linker 2" evidence="2">
    <location>
        <begin position="204"/>
        <end position="206"/>
    </location>
</feature>
<feature type="region of interest" description="Coil 2B" evidence="2">
    <location>
        <begin position="207"/>
        <end position="324"/>
    </location>
</feature>
<feature type="region of interest" description="Tail" evidence="2">
    <location>
        <begin position="325"/>
        <end position="1265"/>
    </location>
</feature>
<feature type="region of interest" description="Disordered" evidence="4">
    <location>
        <begin position="383"/>
        <end position="521"/>
    </location>
</feature>
<feature type="region of interest" description="Disordered" evidence="4">
    <location>
        <begin position="667"/>
        <end position="830"/>
    </location>
</feature>
<feature type="region of interest" description="Disordered" evidence="4">
    <location>
        <begin position="863"/>
        <end position="1073"/>
    </location>
</feature>
<feature type="region of interest" description="Disordered" evidence="4">
    <location>
        <begin position="1093"/>
        <end position="1116"/>
    </location>
</feature>
<feature type="region of interest" description="Disordered" evidence="4">
    <location>
        <begin position="1232"/>
        <end position="1265"/>
    </location>
</feature>
<feature type="compositionally biased region" description="Polar residues" evidence="4">
    <location>
        <begin position="383"/>
        <end position="402"/>
    </location>
</feature>
<feature type="compositionally biased region" description="Basic and acidic residues" evidence="4">
    <location>
        <begin position="403"/>
        <end position="418"/>
    </location>
</feature>
<feature type="compositionally biased region" description="Polar residues" evidence="4">
    <location>
        <begin position="422"/>
        <end position="441"/>
    </location>
</feature>
<feature type="compositionally biased region" description="Basic and acidic residues" evidence="4">
    <location>
        <begin position="444"/>
        <end position="459"/>
    </location>
</feature>
<feature type="compositionally biased region" description="Polar residues" evidence="4">
    <location>
        <begin position="479"/>
        <end position="496"/>
    </location>
</feature>
<feature type="compositionally biased region" description="Acidic residues" evidence="4">
    <location>
        <begin position="508"/>
        <end position="520"/>
    </location>
</feature>
<feature type="compositionally biased region" description="Acidic residues" evidence="4">
    <location>
        <begin position="730"/>
        <end position="739"/>
    </location>
</feature>
<feature type="compositionally biased region" description="Basic and acidic residues" evidence="4">
    <location>
        <begin position="784"/>
        <end position="796"/>
    </location>
</feature>
<feature type="compositionally biased region" description="Basic and acidic residues" evidence="4">
    <location>
        <begin position="803"/>
        <end position="819"/>
    </location>
</feature>
<feature type="compositionally biased region" description="Basic and acidic residues" evidence="4">
    <location>
        <begin position="863"/>
        <end position="897"/>
    </location>
</feature>
<feature type="compositionally biased region" description="Polar residues" evidence="4">
    <location>
        <begin position="901"/>
        <end position="910"/>
    </location>
</feature>
<feature type="compositionally biased region" description="Basic and acidic residues" evidence="4">
    <location>
        <begin position="911"/>
        <end position="935"/>
    </location>
</feature>
<feature type="compositionally biased region" description="Low complexity" evidence="4">
    <location>
        <begin position="943"/>
        <end position="956"/>
    </location>
</feature>
<feature type="compositionally biased region" description="Polar residues" evidence="4">
    <location>
        <begin position="1015"/>
        <end position="1043"/>
    </location>
</feature>
<feature type="compositionally biased region" description="Basic and acidic residues" evidence="4">
    <location>
        <begin position="1061"/>
        <end position="1070"/>
    </location>
</feature>
<feature type="compositionally biased region" description="Polar residues" evidence="4">
    <location>
        <begin position="1105"/>
        <end position="1116"/>
    </location>
</feature>
<feature type="compositionally biased region" description="Polar residues" evidence="4">
    <location>
        <begin position="1242"/>
        <end position="1251"/>
    </location>
</feature>
<feature type="compositionally biased region" description="Acidic residues" evidence="4">
    <location>
        <begin position="1252"/>
        <end position="1265"/>
    </location>
</feature>
<keyword id="KW-0175">Coiled coil</keyword>
<keyword id="KW-0217">Developmental protein</keyword>
<keyword id="KW-0403">Intermediate filament</keyword>
<keyword id="KW-0524">Neurogenesis</keyword>
<keyword id="KW-1185">Reference proteome</keyword>
<dbReference type="EMBL" id="CR848841">
    <property type="status" value="NOT_ANNOTATED_CDS"/>
    <property type="molecule type" value="Genomic_DNA"/>
</dbReference>
<dbReference type="RefSeq" id="NP_001410998.1">
    <property type="nucleotide sequence ID" value="NM_001424069.1"/>
</dbReference>
<dbReference type="RefSeq" id="XP_001919922.1">
    <property type="nucleotide sequence ID" value="XM_001919887.6"/>
</dbReference>
<dbReference type="SMR" id="P86839"/>
<dbReference type="STRING" id="7955.ENSDARP00000112046"/>
<dbReference type="PaxDb" id="7955-ENSDARP00000112046"/>
<dbReference type="Ensembl" id="ENSDART00000122681">
    <property type="protein sequence ID" value="ENSDARP00000112046"/>
    <property type="gene ID" value="ENSDARG00000088805"/>
</dbReference>
<dbReference type="GeneID" id="100150939"/>
<dbReference type="AGR" id="ZFIN:ZDB-GENE-071119-2"/>
<dbReference type="ZFIN" id="ZDB-GENE-071119-2">
    <property type="gene designation" value="nes"/>
</dbReference>
<dbReference type="eggNOG" id="ENOG502RYFK">
    <property type="taxonomic scope" value="Eukaryota"/>
</dbReference>
<dbReference type="HOGENOM" id="CLU_274633_0_0_1"/>
<dbReference type="InParanoid" id="P86839"/>
<dbReference type="OMA" id="QASHMDE"/>
<dbReference type="OrthoDB" id="8886319at2759"/>
<dbReference type="PhylomeDB" id="P86839"/>
<dbReference type="PRO" id="PR:P86839"/>
<dbReference type="Proteomes" id="UP000000437">
    <property type="component" value="Chromosome 16"/>
</dbReference>
<dbReference type="Bgee" id="ENSDARG00000088805">
    <property type="expression patterns" value="Expressed in pretectal region and 46 other cell types or tissues"/>
</dbReference>
<dbReference type="GO" id="GO:0005882">
    <property type="term" value="C:intermediate filament"/>
    <property type="evidence" value="ECO:0000318"/>
    <property type="project" value="GO_Central"/>
</dbReference>
<dbReference type="GO" id="GO:0031730">
    <property type="term" value="F:CCR5 chemokine receptor binding"/>
    <property type="evidence" value="ECO:0000318"/>
    <property type="project" value="GO_Central"/>
</dbReference>
<dbReference type="GO" id="GO:0019215">
    <property type="term" value="F:intermediate filament binding"/>
    <property type="evidence" value="ECO:0000250"/>
    <property type="project" value="UniProtKB"/>
</dbReference>
<dbReference type="GO" id="GO:0007420">
    <property type="term" value="P:brain development"/>
    <property type="evidence" value="ECO:0000315"/>
    <property type="project" value="UniProtKB"/>
</dbReference>
<dbReference type="GO" id="GO:0021545">
    <property type="term" value="P:cranial nerve development"/>
    <property type="evidence" value="ECO:0000315"/>
    <property type="project" value="ZFIN"/>
</dbReference>
<dbReference type="GO" id="GO:0031076">
    <property type="term" value="P:embryonic camera-type eye development"/>
    <property type="evidence" value="ECO:0000315"/>
    <property type="project" value="UniProtKB"/>
</dbReference>
<dbReference type="GO" id="GO:0043066">
    <property type="term" value="P:negative regulation of apoptotic process"/>
    <property type="evidence" value="ECO:0000315"/>
    <property type="project" value="UniProtKB"/>
</dbReference>
<dbReference type="GO" id="GO:0030844">
    <property type="term" value="P:positive regulation of intermediate filament depolymerization"/>
    <property type="evidence" value="ECO:0000250"/>
    <property type="project" value="UniProtKB"/>
</dbReference>
<dbReference type="GO" id="GO:2000179">
    <property type="term" value="P:positive regulation of neural precursor cell proliferation"/>
    <property type="evidence" value="ECO:0000250"/>
    <property type="project" value="UniProtKB"/>
</dbReference>
<dbReference type="FunFam" id="1.20.5.170:FF:000081">
    <property type="entry name" value="Nestin"/>
    <property type="match status" value="1"/>
</dbReference>
<dbReference type="Gene3D" id="1.20.5.170">
    <property type="match status" value="1"/>
</dbReference>
<dbReference type="Gene3D" id="1.20.5.1160">
    <property type="entry name" value="Vasodilator-stimulated phosphoprotein"/>
    <property type="match status" value="1"/>
</dbReference>
<dbReference type="InterPro" id="IPR018039">
    <property type="entry name" value="IF_conserved"/>
</dbReference>
<dbReference type="InterPro" id="IPR039008">
    <property type="entry name" value="IF_rod_dom"/>
</dbReference>
<dbReference type="InterPro" id="IPR031211">
    <property type="entry name" value="Nestin"/>
</dbReference>
<dbReference type="PANTHER" id="PTHR47051">
    <property type="entry name" value="NESTIN"/>
    <property type="match status" value="1"/>
</dbReference>
<dbReference type="PANTHER" id="PTHR47051:SF1">
    <property type="entry name" value="NESTIN"/>
    <property type="match status" value="1"/>
</dbReference>
<dbReference type="Pfam" id="PF00038">
    <property type="entry name" value="Filament"/>
    <property type="match status" value="1"/>
</dbReference>
<dbReference type="SMART" id="SM01391">
    <property type="entry name" value="Filament"/>
    <property type="match status" value="1"/>
</dbReference>
<dbReference type="SUPFAM" id="SSF64593">
    <property type="entry name" value="Intermediate filament protein, coiled coil region"/>
    <property type="match status" value="2"/>
</dbReference>
<dbReference type="PROSITE" id="PS00226">
    <property type="entry name" value="IF_ROD_1"/>
    <property type="match status" value="1"/>
</dbReference>
<dbReference type="PROSITE" id="PS51842">
    <property type="entry name" value="IF_ROD_2"/>
    <property type="match status" value="1"/>
</dbReference>
<organism>
    <name type="scientific">Danio rerio</name>
    <name type="common">Zebrafish</name>
    <name type="synonym">Brachydanio rerio</name>
    <dbReference type="NCBI Taxonomy" id="7955"/>
    <lineage>
        <taxon>Eukaryota</taxon>
        <taxon>Metazoa</taxon>
        <taxon>Chordata</taxon>
        <taxon>Craniata</taxon>
        <taxon>Vertebrata</taxon>
        <taxon>Euteleostomi</taxon>
        <taxon>Actinopterygii</taxon>
        <taxon>Neopterygii</taxon>
        <taxon>Teleostei</taxon>
        <taxon>Ostariophysi</taxon>
        <taxon>Cypriniformes</taxon>
        <taxon>Danionidae</taxon>
        <taxon>Danioninae</taxon>
        <taxon>Danio</taxon>
    </lineage>
</organism>
<comment type="function">
    <text evidence="1 6">Promotes the disassembly of phosphorylated vimentin intermediate filaments (IF) during mitosis and may play a role in the trafficking and distribution of IF proteins and other cellular factors to daughter cells during progenitor cell division. Required for survival, renewal and mitogen-stimulated proliferation of neural progenitor cells (By similarity). Required for brain and eye development.</text>
</comment>
<comment type="subunit">
    <text evidence="1">Forms homodimers and homotetramers in vitro. In mixtures with other intermediate filament proteins such as vimentin and alpha-internexin, preferentially forms heterodimers (By similarity).</text>
</comment>
<comment type="tissue specificity">
    <text evidence="5">Widely expressed throughout the developing nervous system at 24 hours post-fertilization (hpf). As development progresses, expression becomes restricted to proliferative zones of the developing and postembryonic central nervous system. In the peripheral nervous system, expressed in the cranial ganglia. Also expressed in mesodermal muscle precursor cells and in cranial mesenchymal tissue.</text>
</comment>
<comment type="developmental stage">
    <text evidence="5">Expression is not detected before the 3-somite stage at 10-11 hours post-fertilization. Earliest expression is detected during mid-neurulation.</text>
</comment>
<comment type="similarity">
    <text evidence="3">Belongs to the intermediate filament family.</text>
</comment>
<protein>
    <recommendedName>
        <fullName>Nestin</fullName>
    </recommendedName>
</protein>
<evidence type="ECO:0000250" key="1"/>
<evidence type="ECO:0000255" key="2"/>
<evidence type="ECO:0000255" key="3">
    <source>
        <dbReference type="PROSITE-ProRule" id="PRU01188"/>
    </source>
</evidence>
<evidence type="ECO:0000256" key="4">
    <source>
        <dbReference type="SAM" id="MobiDB-lite"/>
    </source>
</evidence>
<evidence type="ECO:0000269" key="5">
    <source>
    </source>
</evidence>
<evidence type="ECO:0000269" key="6">
    <source>
    </source>
</evidence>
<evidence type="ECO:0000305" key="7"/>
<reference key="1">
    <citation type="journal article" date="2013" name="Nature">
        <title>The zebrafish reference genome sequence and its relationship to the human genome.</title>
        <authorList>
            <person name="Howe K."/>
            <person name="Clark M.D."/>
            <person name="Torroja C.F."/>
            <person name="Torrance J."/>
            <person name="Berthelot C."/>
            <person name="Muffato M."/>
            <person name="Collins J.E."/>
            <person name="Humphray S."/>
            <person name="McLaren K."/>
            <person name="Matthews L."/>
            <person name="McLaren S."/>
            <person name="Sealy I."/>
            <person name="Caccamo M."/>
            <person name="Churcher C."/>
            <person name="Scott C."/>
            <person name="Barrett J.C."/>
            <person name="Koch R."/>
            <person name="Rauch G.J."/>
            <person name="White S."/>
            <person name="Chow W."/>
            <person name="Kilian B."/>
            <person name="Quintais L.T."/>
            <person name="Guerra-Assuncao J.A."/>
            <person name="Zhou Y."/>
            <person name="Gu Y."/>
            <person name="Yen J."/>
            <person name="Vogel J.H."/>
            <person name="Eyre T."/>
            <person name="Redmond S."/>
            <person name="Banerjee R."/>
            <person name="Chi J."/>
            <person name="Fu B."/>
            <person name="Langley E."/>
            <person name="Maguire S.F."/>
            <person name="Laird G.K."/>
            <person name="Lloyd D."/>
            <person name="Kenyon E."/>
            <person name="Donaldson S."/>
            <person name="Sehra H."/>
            <person name="Almeida-King J."/>
            <person name="Loveland J."/>
            <person name="Trevanion S."/>
            <person name="Jones M."/>
            <person name="Quail M."/>
            <person name="Willey D."/>
            <person name="Hunt A."/>
            <person name="Burton J."/>
            <person name="Sims S."/>
            <person name="McLay K."/>
            <person name="Plumb B."/>
            <person name="Davis J."/>
            <person name="Clee C."/>
            <person name="Oliver K."/>
            <person name="Clark R."/>
            <person name="Riddle C."/>
            <person name="Elliot D."/>
            <person name="Threadgold G."/>
            <person name="Harden G."/>
            <person name="Ware D."/>
            <person name="Begum S."/>
            <person name="Mortimore B."/>
            <person name="Kerry G."/>
            <person name="Heath P."/>
            <person name="Phillimore B."/>
            <person name="Tracey A."/>
            <person name="Corby N."/>
            <person name="Dunn M."/>
            <person name="Johnson C."/>
            <person name="Wood J."/>
            <person name="Clark S."/>
            <person name="Pelan S."/>
            <person name="Griffiths G."/>
            <person name="Smith M."/>
            <person name="Glithero R."/>
            <person name="Howden P."/>
            <person name="Barker N."/>
            <person name="Lloyd C."/>
            <person name="Stevens C."/>
            <person name="Harley J."/>
            <person name="Holt K."/>
            <person name="Panagiotidis G."/>
            <person name="Lovell J."/>
            <person name="Beasley H."/>
            <person name="Henderson C."/>
            <person name="Gordon D."/>
            <person name="Auger K."/>
            <person name="Wright D."/>
            <person name="Collins J."/>
            <person name="Raisen C."/>
            <person name="Dyer L."/>
            <person name="Leung K."/>
            <person name="Robertson L."/>
            <person name="Ambridge K."/>
            <person name="Leongamornlert D."/>
            <person name="McGuire S."/>
            <person name="Gilderthorp R."/>
            <person name="Griffiths C."/>
            <person name="Manthravadi D."/>
            <person name="Nichol S."/>
            <person name="Barker G."/>
            <person name="Whitehead S."/>
            <person name="Kay M."/>
            <person name="Brown J."/>
            <person name="Murnane C."/>
            <person name="Gray E."/>
            <person name="Humphries M."/>
            <person name="Sycamore N."/>
            <person name="Barker D."/>
            <person name="Saunders D."/>
            <person name="Wallis J."/>
            <person name="Babbage A."/>
            <person name="Hammond S."/>
            <person name="Mashreghi-Mohammadi M."/>
            <person name="Barr L."/>
            <person name="Martin S."/>
            <person name="Wray P."/>
            <person name="Ellington A."/>
            <person name="Matthews N."/>
            <person name="Ellwood M."/>
            <person name="Woodmansey R."/>
            <person name="Clark G."/>
            <person name="Cooper J."/>
            <person name="Tromans A."/>
            <person name="Grafham D."/>
            <person name="Skuce C."/>
            <person name="Pandian R."/>
            <person name="Andrews R."/>
            <person name="Harrison E."/>
            <person name="Kimberley A."/>
            <person name="Garnett J."/>
            <person name="Fosker N."/>
            <person name="Hall R."/>
            <person name="Garner P."/>
            <person name="Kelly D."/>
            <person name="Bird C."/>
            <person name="Palmer S."/>
            <person name="Gehring I."/>
            <person name="Berger A."/>
            <person name="Dooley C.M."/>
            <person name="Ersan-Urun Z."/>
            <person name="Eser C."/>
            <person name="Geiger H."/>
            <person name="Geisler M."/>
            <person name="Karotki L."/>
            <person name="Kirn A."/>
            <person name="Konantz J."/>
            <person name="Konantz M."/>
            <person name="Oberlander M."/>
            <person name="Rudolph-Geiger S."/>
            <person name="Teucke M."/>
            <person name="Lanz C."/>
            <person name="Raddatz G."/>
            <person name="Osoegawa K."/>
            <person name="Zhu B."/>
            <person name="Rapp A."/>
            <person name="Widaa S."/>
            <person name="Langford C."/>
            <person name="Yang F."/>
            <person name="Schuster S.C."/>
            <person name="Carter N.P."/>
            <person name="Harrow J."/>
            <person name="Ning Z."/>
            <person name="Herrero J."/>
            <person name="Searle S.M."/>
            <person name="Enright A."/>
            <person name="Geisler R."/>
            <person name="Plasterk R.H."/>
            <person name="Lee C."/>
            <person name="Westerfield M."/>
            <person name="de Jong P.J."/>
            <person name="Zon L.I."/>
            <person name="Postlethwait J.H."/>
            <person name="Nusslein-Volhard C."/>
            <person name="Hubbard T.J."/>
            <person name="Roest Crollius H."/>
            <person name="Rogers J."/>
            <person name="Stemple D.L."/>
        </authorList>
    </citation>
    <scope>NUCLEOTIDE SEQUENCE [LARGE SCALE GENOMIC DNA]</scope>
    <source>
        <strain>Tuebingen</strain>
    </source>
</reference>
<reference evidence="7" key="2">
    <citation type="journal article" date="2007" name="BMC Dev. Biol.">
        <title>Expression of the zebrafish intermediate neurofilament Nestin in the developing nervous system and in neural proliferation zones at postembryonic stages.</title>
        <authorList>
            <person name="Mahler J."/>
            <person name="Driever W."/>
        </authorList>
    </citation>
    <scope>TISSUE SPECIFICITY</scope>
    <scope>DEVELOPMENTAL STAGE</scope>
    <source>
        <strain evidence="5">AB</strain>
    </source>
</reference>
<reference evidence="7" key="3">
    <citation type="journal article" date="2010" name="PLoS ONE">
        <title>Nestin is essential for zebrafish brain and eye development through control of progenitor cell apoptosis.</title>
        <authorList>
            <person name="Chen H.L."/>
            <person name="Yuh C.H."/>
            <person name="Wu K.K."/>
        </authorList>
    </citation>
    <scope>FUNCTION</scope>
    <source>
        <strain evidence="6">AB</strain>
    </source>
</reference>
<accession>P86839</accession>
<gene>
    <name type="primary">nes</name>
</gene>
<proteinExistence type="evidence at transcript level"/>
<name>NEST_DANRE</name>